<protein>
    <recommendedName>
        <fullName>Tryptophan 5-hydroxylase 1</fullName>
        <ecNumber evidence="1">1.14.16.4</ecNumber>
    </recommendedName>
    <alternativeName>
        <fullName>Tryptophan 5-monooxygenase 1</fullName>
    </alternativeName>
</protein>
<gene>
    <name type="primary">TPH1</name>
    <name type="synonym">TPH</name>
</gene>
<organism>
    <name type="scientific">Gallus gallus</name>
    <name type="common">Chicken</name>
    <dbReference type="NCBI Taxonomy" id="9031"/>
    <lineage>
        <taxon>Eukaryota</taxon>
        <taxon>Metazoa</taxon>
        <taxon>Chordata</taxon>
        <taxon>Craniata</taxon>
        <taxon>Vertebrata</taxon>
        <taxon>Euteleostomi</taxon>
        <taxon>Archelosauria</taxon>
        <taxon>Archosauria</taxon>
        <taxon>Dinosauria</taxon>
        <taxon>Saurischia</taxon>
        <taxon>Theropoda</taxon>
        <taxon>Coelurosauria</taxon>
        <taxon>Aves</taxon>
        <taxon>Neognathae</taxon>
        <taxon>Galloanserae</taxon>
        <taxon>Galliformes</taxon>
        <taxon>Phasianidae</taxon>
        <taxon>Phasianinae</taxon>
        <taxon>Gallus</taxon>
    </lineage>
</organism>
<name>TPH1_CHICK</name>
<comment type="function">
    <text evidence="1">Oxidizes L-tryptophan to 5-hydroxy-l-tryptophan in the rate-determining step of serotonin biosynthesis.</text>
</comment>
<comment type="catalytic activity">
    <reaction evidence="1">
        <text>(6R)-L-erythro-5,6,7,8-tetrahydrobiopterin + L-tryptophan + O2 = 5-hydroxy-L-tryptophan + (4aS,6R)-4a-hydroxy-L-erythro-5,6,7,8-tetrahydrobiopterin</text>
        <dbReference type="Rhea" id="RHEA:16709"/>
        <dbReference type="ChEBI" id="CHEBI:15379"/>
        <dbReference type="ChEBI" id="CHEBI:15642"/>
        <dbReference type="ChEBI" id="CHEBI:57912"/>
        <dbReference type="ChEBI" id="CHEBI:58266"/>
        <dbReference type="ChEBI" id="CHEBI:59560"/>
        <dbReference type="EC" id="1.14.16.4"/>
    </reaction>
</comment>
<comment type="cofactor">
    <cofactor evidence="4">
        <name>Fe(2+)</name>
        <dbReference type="ChEBI" id="CHEBI:29033"/>
    </cofactor>
</comment>
<comment type="pathway">
    <text evidence="1">Aromatic compound metabolism; serotonin biosynthesis; serotonin from L-tryptophan: step 1/2.</text>
</comment>
<comment type="subunit">
    <text evidence="4">Homotetramer.</text>
</comment>
<comment type="similarity">
    <text evidence="5">Belongs to the biopterin-dependent aromatic amino acid hydroxylase family.</text>
</comment>
<keyword id="KW-0002">3D-structure</keyword>
<keyword id="KW-0408">Iron</keyword>
<keyword id="KW-0479">Metal-binding</keyword>
<keyword id="KW-0503">Monooxygenase</keyword>
<keyword id="KW-0560">Oxidoreductase</keyword>
<keyword id="KW-0597">Phosphoprotein</keyword>
<keyword id="KW-1185">Reference proteome</keyword>
<keyword id="KW-0724">Serotonin biosynthesis</keyword>
<reference key="1">
    <citation type="journal article" date="1996" name="Brain Res. Mol. Brain Res.">
        <title>Molecular cloning of chick pineal tryptophan hydroxylase and circadian oscillation of its mRNA levels.</title>
        <authorList>
            <person name="Florez J.C."/>
            <person name="Seidenman K.J."/>
            <person name="Barrett R.K."/>
            <person name="Sangoram A.M."/>
            <person name="Takahashi J.S."/>
        </authorList>
    </citation>
    <scope>NUCLEOTIDE SEQUENCE [MRNA]</scope>
    <source>
        <strain>White leghorn</strain>
        <tissue>Pineal gland</tissue>
    </source>
</reference>
<reference key="2">
    <citation type="journal article" date="2008" name="Biochemistry">
        <title>Crystal structure of tryptophan hydroxylase with bound amino acid substrate.</title>
        <authorList>
            <person name="Windahl M.S."/>
            <person name="Petersen C.R."/>
            <person name="Christensen H.E."/>
            <person name="Harris P."/>
        </authorList>
    </citation>
    <scope>X-RAY CRYSTALLOGRAPHY (1.9 ANGSTROMS) OF 101-414 IN COMPLEX WITH TRYPTOPHAN AND IMIDAZOLE</scope>
    <scope>SUBUNIT</scope>
    <scope>IRON-BINDING SITES</scope>
</reference>
<evidence type="ECO:0000250" key="1">
    <source>
        <dbReference type="UniProtKB" id="P17532"/>
    </source>
</evidence>
<evidence type="ECO:0000255" key="2"/>
<evidence type="ECO:0000255" key="3">
    <source>
        <dbReference type="PROSITE-ProRule" id="PRU01007"/>
    </source>
</evidence>
<evidence type="ECO:0000269" key="4">
    <source>
    </source>
</evidence>
<evidence type="ECO:0000305" key="5"/>
<evidence type="ECO:0007829" key="6">
    <source>
        <dbReference type="PDB" id="3E2T"/>
    </source>
</evidence>
<proteinExistence type="evidence at protein level"/>
<accession>P70080</accession>
<feature type="chain" id="PRO_0000205572" description="Tryptophan 5-hydroxylase 1">
    <location>
        <begin position="1"/>
        <end position="445"/>
    </location>
</feature>
<feature type="domain" description="ACT" evidence="3">
    <location>
        <begin position="19"/>
        <end position="94"/>
    </location>
</feature>
<feature type="binding site" evidence="4">
    <location>
        <position position="236"/>
    </location>
    <ligand>
        <name>L-tryptophan</name>
        <dbReference type="ChEBI" id="CHEBI:57912"/>
    </ligand>
</feature>
<feature type="binding site" evidence="4">
    <location>
        <position position="258"/>
    </location>
    <ligand>
        <name>L-tryptophan</name>
        <dbReference type="ChEBI" id="CHEBI:57912"/>
    </ligand>
</feature>
<feature type="binding site" evidence="4">
    <location>
        <position position="266"/>
    </location>
    <ligand>
        <name>L-tryptophan</name>
        <dbReference type="ChEBI" id="CHEBI:57912"/>
    </ligand>
</feature>
<feature type="binding site" evidence="4">
    <location>
        <position position="273"/>
    </location>
    <ligand>
        <name>Fe cation</name>
        <dbReference type="ChEBI" id="CHEBI:24875"/>
    </ligand>
</feature>
<feature type="binding site" evidence="4">
    <location>
        <position position="278"/>
    </location>
    <ligand>
        <name>Fe cation</name>
        <dbReference type="ChEBI" id="CHEBI:24875"/>
    </ligand>
</feature>
<feature type="binding site" evidence="4">
    <location>
        <position position="318"/>
    </location>
    <ligand>
        <name>Fe cation</name>
        <dbReference type="ChEBI" id="CHEBI:24875"/>
    </ligand>
</feature>
<feature type="binding site" evidence="4">
    <location>
        <position position="337"/>
    </location>
    <ligand>
        <name>L-tryptophan</name>
        <dbReference type="ChEBI" id="CHEBI:57912"/>
    </ligand>
</feature>
<feature type="binding site" evidence="4">
    <location>
        <position position="367"/>
    </location>
    <ligand>
        <name>L-tryptophan</name>
        <dbReference type="ChEBI" id="CHEBI:57912"/>
    </ligand>
</feature>
<feature type="modified residue" description="Phosphoserine; by PKA" evidence="2">
    <location>
        <position position="58"/>
    </location>
</feature>
<feature type="helix" evidence="6">
    <location>
        <begin position="113"/>
        <end position="117"/>
    </location>
</feature>
<feature type="turn" evidence="6">
    <location>
        <begin position="126"/>
        <end position="128"/>
    </location>
</feature>
<feature type="helix" evidence="6">
    <location>
        <begin position="135"/>
        <end position="138"/>
    </location>
</feature>
<feature type="helix" evidence="6">
    <location>
        <begin position="140"/>
        <end position="155"/>
    </location>
</feature>
<feature type="helix" evidence="6">
    <location>
        <begin position="169"/>
        <end position="189"/>
    </location>
</feature>
<feature type="helix" evidence="6">
    <location>
        <begin position="192"/>
        <end position="196"/>
    </location>
</feature>
<feature type="helix" evidence="6">
    <location>
        <begin position="198"/>
        <end position="205"/>
    </location>
</feature>
<feature type="helix" evidence="6">
    <location>
        <begin position="215"/>
        <end position="226"/>
    </location>
</feature>
<feature type="strand" evidence="6">
    <location>
        <begin position="229"/>
        <end position="232"/>
    </location>
</feature>
<feature type="strand" evidence="6">
    <location>
        <begin position="234"/>
        <end position="237"/>
    </location>
</feature>
<feature type="helix" evidence="6">
    <location>
        <begin position="239"/>
        <end position="247"/>
    </location>
</feature>
<feature type="strand" evidence="6">
    <location>
        <begin position="250"/>
        <end position="253"/>
    </location>
</feature>
<feature type="helix" evidence="6">
    <location>
        <begin position="271"/>
        <end position="277"/>
    </location>
</feature>
<feature type="helix" evidence="6">
    <location>
        <begin position="279"/>
        <end position="282"/>
    </location>
</feature>
<feature type="helix" evidence="6">
    <location>
        <begin position="285"/>
        <end position="298"/>
    </location>
</feature>
<feature type="helix" evidence="6">
    <location>
        <begin position="303"/>
        <end position="314"/>
    </location>
</feature>
<feature type="turn" evidence="6">
    <location>
        <begin position="315"/>
        <end position="319"/>
    </location>
</feature>
<feature type="strand" evidence="6">
    <location>
        <begin position="321"/>
        <end position="324"/>
    </location>
</feature>
<feature type="strand" evidence="6">
    <location>
        <begin position="327"/>
        <end position="330"/>
    </location>
</feature>
<feature type="helix" evidence="6">
    <location>
        <begin position="333"/>
        <end position="336"/>
    </location>
</feature>
<feature type="helix" evidence="6">
    <location>
        <begin position="339"/>
        <end position="345"/>
    </location>
</feature>
<feature type="strand" evidence="6">
    <location>
        <begin position="352"/>
        <end position="354"/>
    </location>
</feature>
<feature type="helix" evidence="6">
    <location>
        <begin position="357"/>
        <end position="360"/>
    </location>
</feature>
<feature type="strand" evidence="6">
    <location>
        <begin position="367"/>
        <end position="369"/>
    </location>
</feature>
<feature type="strand" evidence="6">
    <location>
        <begin position="374"/>
        <end position="379"/>
    </location>
</feature>
<feature type="helix" evidence="6">
    <location>
        <begin position="380"/>
        <end position="391"/>
    </location>
</feature>
<feature type="strand" evidence="6">
    <location>
        <begin position="401"/>
        <end position="403"/>
    </location>
</feature>
<feature type="turn" evidence="6">
    <location>
        <begin position="404"/>
        <end position="407"/>
    </location>
</feature>
<feature type="strand" evidence="6">
    <location>
        <begin position="408"/>
        <end position="410"/>
    </location>
</feature>
<dbReference type="EC" id="1.14.16.4" evidence="1"/>
<dbReference type="EMBL" id="U26428">
    <property type="protein sequence ID" value="AAC60036.1"/>
    <property type="molecule type" value="mRNA"/>
</dbReference>
<dbReference type="RefSeq" id="NP_990287.1">
    <property type="nucleotide sequence ID" value="NM_204956.2"/>
</dbReference>
<dbReference type="PDB" id="3E2T">
    <property type="method" value="X-ray"/>
    <property type="resolution" value="1.90 A"/>
    <property type="chains" value="A=101-414"/>
</dbReference>
<dbReference type="PDBsum" id="3E2T"/>
<dbReference type="SMR" id="P70080"/>
<dbReference type="FunCoup" id="P70080">
    <property type="interactions" value="26"/>
</dbReference>
<dbReference type="STRING" id="9031.ENSGALP00000063172"/>
<dbReference type="PaxDb" id="9031-ENSGALP00000010070"/>
<dbReference type="GeneID" id="395799"/>
<dbReference type="KEGG" id="gga:395799"/>
<dbReference type="CTD" id="7166"/>
<dbReference type="VEuPathDB" id="HostDB:geneid_395799"/>
<dbReference type="eggNOG" id="KOG3820">
    <property type="taxonomic scope" value="Eukaryota"/>
</dbReference>
<dbReference type="HOGENOM" id="CLU_023198_0_1_1"/>
<dbReference type="InParanoid" id="P70080"/>
<dbReference type="OMA" id="DMPWFPR"/>
<dbReference type="OrthoDB" id="983542at2759"/>
<dbReference type="PhylomeDB" id="P70080"/>
<dbReference type="TreeFam" id="TF313327"/>
<dbReference type="BRENDA" id="1.14.16.4">
    <property type="organism ID" value="1306"/>
</dbReference>
<dbReference type="UniPathway" id="UPA00846">
    <property type="reaction ID" value="UER00799"/>
</dbReference>
<dbReference type="EvolutionaryTrace" id="P70080"/>
<dbReference type="PRO" id="PR:P70080"/>
<dbReference type="Proteomes" id="UP000000539">
    <property type="component" value="Unassembled WGS sequence"/>
</dbReference>
<dbReference type="GO" id="GO:0043005">
    <property type="term" value="C:neuron projection"/>
    <property type="evidence" value="ECO:0000318"/>
    <property type="project" value="GO_Central"/>
</dbReference>
<dbReference type="GO" id="GO:0005506">
    <property type="term" value="F:iron ion binding"/>
    <property type="evidence" value="ECO:0007669"/>
    <property type="project" value="InterPro"/>
</dbReference>
<dbReference type="GO" id="GO:0004510">
    <property type="term" value="F:tryptophan 5-monooxygenase activity"/>
    <property type="evidence" value="ECO:0000318"/>
    <property type="project" value="GO_Central"/>
</dbReference>
<dbReference type="GO" id="GO:0009072">
    <property type="term" value="P:aromatic amino acid metabolic process"/>
    <property type="evidence" value="ECO:0007669"/>
    <property type="project" value="InterPro"/>
</dbReference>
<dbReference type="GO" id="GO:0002576">
    <property type="term" value="P:platelet degranulation"/>
    <property type="evidence" value="ECO:0000250"/>
    <property type="project" value="UniProtKB"/>
</dbReference>
<dbReference type="GO" id="GO:1900046">
    <property type="term" value="P:regulation of hemostasis"/>
    <property type="evidence" value="ECO:0000250"/>
    <property type="project" value="UniProtKB"/>
</dbReference>
<dbReference type="GO" id="GO:0042427">
    <property type="term" value="P:serotonin biosynthetic process"/>
    <property type="evidence" value="ECO:0000250"/>
    <property type="project" value="UniProtKB"/>
</dbReference>
<dbReference type="CDD" id="cd04929">
    <property type="entry name" value="ACT_TPH"/>
    <property type="match status" value="1"/>
</dbReference>
<dbReference type="CDD" id="cd03346">
    <property type="entry name" value="eu_TrpOH"/>
    <property type="match status" value="1"/>
</dbReference>
<dbReference type="FunFam" id="1.10.800.10:FF:000001">
    <property type="entry name" value="tryptophan 5-hydroxylase 1"/>
    <property type="match status" value="1"/>
</dbReference>
<dbReference type="Gene3D" id="1.10.800.10">
    <property type="entry name" value="Aromatic amino acid hydroxylase"/>
    <property type="match status" value="1"/>
</dbReference>
<dbReference type="InterPro" id="IPR045865">
    <property type="entry name" value="ACT-like_dom_sf"/>
</dbReference>
<dbReference type="InterPro" id="IPR002912">
    <property type="entry name" value="ACT_dom"/>
</dbReference>
<dbReference type="InterPro" id="IPR001273">
    <property type="entry name" value="ArAA_hydroxylase"/>
</dbReference>
<dbReference type="InterPro" id="IPR018301">
    <property type="entry name" value="ArAA_hydroxylase_Fe/CU_BS"/>
</dbReference>
<dbReference type="InterPro" id="IPR036951">
    <property type="entry name" value="ArAA_hydroxylase_sf"/>
</dbReference>
<dbReference type="InterPro" id="IPR036329">
    <property type="entry name" value="Aro-AA_hydroxylase_C_sf"/>
</dbReference>
<dbReference type="InterPro" id="IPR019774">
    <property type="entry name" value="Aromatic-AA_hydroxylase_C"/>
</dbReference>
<dbReference type="InterPro" id="IPR005963">
    <property type="entry name" value="Trp_5_mOase"/>
</dbReference>
<dbReference type="InterPro" id="IPR041904">
    <property type="entry name" value="TrpOH_cat"/>
</dbReference>
<dbReference type="InterPro" id="IPR019773">
    <property type="entry name" value="Tyrosine_3-monooxygenase-like"/>
</dbReference>
<dbReference type="NCBIfam" id="TIGR01270">
    <property type="entry name" value="Trp_5_monoox"/>
    <property type="match status" value="1"/>
</dbReference>
<dbReference type="PANTHER" id="PTHR11473">
    <property type="entry name" value="AROMATIC AMINO ACID HYDROXYLASE"/>
    <property type="match status" value="1"/>
</dbReference>
<dbReference type="PANTHER" id="PTHR11473:SF23">
    <property type="entry name" value="TRYPTOPHAN 5-HYDROXYLASE 1"/>
    <property type="match status" value="1"/>
</dbReference>
<dbReference type="Pfam" id="PF01842">
    <property type="entry name" value="ACT"/>
    <property type="match status" value="1"/>
</dbReference>
<dbReference type="Pfam" id="PF00351">
    <property type="entry name" value="Biopterin_H"/>
    <property type="match status" value="1"/>
</dbReference>
<dbReference type="PIRSF" id="PIRSF000336">
    <property type="entry name" value="TH"/>
    <property type="match status" value="1"/>
</dbReference>
<dbReference type="PRINTS" id="PR00372">
    <property type="entry name" value="FYWHYDRXLASE"/>
</dbReference>
<dbReference type="SUPFAM" id="SSF55021">
    <property type="entry name" value="ACT-like"/>
    <property type="match status" value="1"/>
</dbReference>
<dbReference type="SUPFAM" id="SSF56534">
    <property type="entry name" value="Aromatic aminoacid monoxygenases, catalytic and oligomerization domains"/>
    <property type="match status" value="1"/>
</dbReference>
<dbReference type="PROSITE" id="PS51671">
    <property type="entry name" value="ACT"/>
    <property type="match status" value="1"/>
</dbReference>
<dbReference type="PROSITE" id="PS00367">
    <property type="entry name" value="BH4_AAA_HYDROXYL_1"/>
    <property type="match status" value="1"/>
</dbReference>
<dbReference type="PROSITE" id="PS51410">
    <property type="entry name" value="BH4_AAA_HYDROXYL_2"/>
    <property type="match status" value="1"/>
</dbReference>
<sequence>MIEDNKENKDHAPERGRTAIIFSLKNEVGGLVKALKLFQEKHVNLVHIESRKSKRRNSEFEIFVDCDSNREQLNEIFQLLKSHVSIVSMNPTEHFNVQEDGDMENIPWYPKKISDLDKCANRVLMYGSDLDADHPGFKDNVYRKRRKYFADLAMNYKHGDPIPEIEFTEEEIKTWGTVYRELNKLYPTHACREYLKNLPLLTKYCGYREDNIPQLEDVSRFLKERTGFTIRPVAGYLSPRDFLAGLAFRVFHCTQYVRHSSDPLYTPEPDTCHELLGHVPLLAEPSFAQFSQEIGLASLGASDEAVQKLATCYFFTVEFGLCKQEGQLRVYGAGLLSSISELKHSLSGSAKVKPFDPKVTCKQECLITTFQEVYFVSESFEEAKEKMREFAKTIKRPFGVKYNPYTQSVQILKDTKSIASVVNELRHELDIVSDALSKMGKQLEV</sequence>